<organism>
    <name type="scientific">Bacillus anthracis (strain CDC 684 / NRRL 3495)</name>
    <dbReference type="NCBI Taxonomy" id="568206"/>
    <lineage>
        <taxon>Bacteria</taxon>
        <taxon>Bacillati</taxon>
        <taxon>Bacillota</taxon>
        <taxon>Bacilli</taxon>
        <taxon>Bacillales</taxon>
        <taxon>Bacillaceae</taxon>
        <taxon>Bacillus</taxon>
        <taxon>Bacillus cereus group</taxon>
    </lineage>
</organism>
<gene>
    <name evidence="1" type="primary">metAA</name>
    <name type="ordered locus">BAMEG_5699</name>
</gene>
<protein>
    <recommendedName>
        <fullName evidence="1">Homoserine O-acetyltransferase</fullName>
        <shortName evidence="1">HAT</shortName>
        <ecNumber evidence="1">2.3.1.31</ecNumber>
    </recommendedName>
    <alternativeName>
        <fullName evidence="1">Homoserine transacetylase</fullName>
        <shortName evidence="1">HTA</shortName>
    </alternativeName>
</protein>
<proteinExistence type="inferred from homology"/>
<dbReference type="EC" id="2.3.1.31" evidence="1"/>
<dbReference type="EMBL" id="CP001215">
    <property type="protein sequence ID" value="ACP14734.1"/>
    <property type="molecule type" value="Genomic_DNA"/>
</dbReference>
<dbReference type="SMR" id="C3LFT4"/>
<dbReference type="KEGG" id="bah:BAMEG_5699"/>
<dbReference type="HOGENOM" id="CLU_057851_0_1_9"/>
<dbReference type="UniPathway" id="UPA00051">
    <property type="reaction ID" value="UER00074"/>
</dbReference>
<dbReference type="GO" id="GO:0005737">
    <property type="term" value="C:cytoplasm"/>
    <property type="evidence" value="ECO:0007669"/>
    <property type="project" value="UniProtKB-SubCell"/>
</dbReference>
<dbReference type="GO" id="GO:0004414">
    <property type="term" value="F:homoserine O-acetyltransferase activity"/>
    <property type="evidence" value="ECO:0007669"/>
    <property type="project" value="UniProtKB-EC"/>
</dbReference>
<dbReference type="GO" id="GO:0008899">
    <property type="term" value="F:homoserine O-succinyltransferase activity"/>
    <property type="evidence" value="ECO:0007669"/>
    <property type="project" value="UniProtKB-UniRule"/>
</dbReference>
<dbReference type="GO" id="GO:0019281">
    <property type="term" value="P:L-methionine biosynthetic process from homoserine via O-succinyl-L-homoserine and cystathionine"/>
    <property type="evidence" value="ECO:0007669"/>
    <property type="project" value="InterPro"/>
</dbReference>
<dbReference type="CDD" id="cd03131">
    <property type="entry name" value="GATase1_HTS"/>
    <property type="match status" value="1"/>
</dbReference>
<dbReference type="FunFam" id="3.40.50.880:FF:000004">
    <property type="entry name" value="Homoserine O-succinyltransferase"/>
    <property type="match status" value="1"/>
</dbReference>
<dbReference type="Gene3D" id="3.40.50.880">
    <property type="match status" value="1"/>
</dbReference>
<dbReference type="HAMAP" id="MF_00295">
    <property type="entry name" value="MetA_acyltransf"/>
    <property type="match status" value="1"/>
</dbReference>
<dbReference type="InterPro" id="IPR029062">
    <property type="entry name" value="Class_I_gatase-like"/>
</dbReference>
<dbReference type="InterPro" id="IPR005697">
    <property type="entry name" value="HST_MetA"/>
</dbReference>
<dbReference type="InterPro" id="IPR033752">
    <property type="entry name" value="MetA_family"/>
</dbReference>
<dbReference type="NCBIfam" id="TIGR01001">
    <property type="entry name" value="metA"/>
    <property type="match status" value="1"/>
</dbReference>
<dbReference type="PANTHER" id="PTHR20919">
    <property type="entry name" value="HOMOSERINE O-SUCCINYLTRANSFERASE"/>
    <property type="match status" value="1"/>
</dbReference>
<dbReference type="PANTHER" id="PTHR20919:SF0">
    <property type="entry name" value="HOMOSERINE O-SUCCINYLTRANSFERASE"/>
    <property type="match status" value="1"/>
</dbReference>
<dbReference type="Pfam" id="PF04204">
    <property type="entry name" value="HTS"/>
    <property type="match status" value="1"/>
</dbReference>
<dbReference type="PIRSF" id="PIRSF000450">
    <property type="entry name" value="H_ser_succinyltr"/>
    <property type="match status" value="1"/>
</dbReference>
<dbReference type="SUPFAM" id="SSF52317">
    <property type="entry name" value="Class I glutamine amidotransferase-like"/>
    <property type="match status" value="1"/>
</dbReference>
<comment type="function">
    <text evidence="1">Transfers an acetyl group from acetyl-CoA to L-homoserine, forming acetyl-L-homoserine.</text>
</comment>
<comment type="catalytic activity">
    <reaction evidence="1">
        <text>L-homoserine + acetyl-CoA = O-acetyl-L-homoserine + CoA</text>
        <dbReference type="Rhea" id="RHEA:13701"/>
        <dbReference type="ChEBI" id="CHEBI:57287"/>
        <dbReference type="ChEBI" id="CHEBI:57288"/>
        <dbReference type="ChEBI" id="CHEBI:57476"/>
        <dbReference type="ChEBI" id="CHEBI:57716"/>
        <dbReference type="EC" id="2.3.1.31"/>
    </reaction>
</comment>
<comment type="pathway">
    <text evidence="1">Amino-acid biosynthesis; L-methionine biosynthesis via de novo pathway; O-acetyl-L-homoserine from L-homoserine: step 1/1.</text>
</comment>
<comment type="subcellular location">
    <subcellularLocation>
        <location evidence="1">Cytoplasm</location>
    </subcellularLocation>
</comment>
<comment type="similarity">
    <text evidence="1">Belongs to the MetA family.</text>
</comment>
<keyword id="KW-0012">Acyltransferase</keyword>
<keyword id="KW-0028">Amino-acid biosynthesis</keyword>
<keyword id="KW-0963">Cytoplasm</keyword>
<keyword id="KW-0486">Methionine biosynthesis</keyword>
<keyword id="KW-0808">Transferase</keyword>
<reference key="1">
    <citation type="submission" date="2008-10" db="EMBL/GenBank/DDBJ databases">
        <title>Genome sequence of Bacillus anthracis str. CDC 684.</title>
        <authorList>
            <person name="Dodson R.J."/>
            <person name="Munk A.C."/>
            <person name="Brettin T."/>
            <person name="Bruce D."/>
            <person name="Detter C."/>
            <person name="Tapia R."/>
            <person name="Han C."/>
            <person name="Sutton G."/>
            <person name="Sims D."/>
        </authorList>
    </citation>
    <scope>NUCLEOTIDE SEQUENCE [LARGE SCALE GENOMIC DNA]</scope>
    <source>
        <strain>CDC 684 / NRRL 3495</strain>
    </source>
</reference>
<feature type="chain" id="PRO_1000132698" description="Homoserine O-acetyltransferase">
    <location>
        <begin position="1"/>
        <end position="301"/>
    </location>
</feature>
<feature type="active site" description="Acyl-thioester intermediate" evidence="1">
    <location>
        <position position="142"/>
    </location>
</feature>
<feature type="active site" description="Proton acceptor" evidence="1">
    <location>
        <position position="235"/>
    </location>
</feature>
<feature type="active site" evidence="1">
    <location>
        <position position="237"/>
    </location>
</feature>
<feature type="binding site" evidence="1">
    <location>
        <position position="163"/>
    </location>
    <ligand>
        <name>substrate</name>
    </ligand>
</feature>
<feature type="binding site" evidence="1">
    <location>
        <position position="192"/>
    </location>
    <ligand>
        <name>substrate</name>
    </ligand>
</feature>
<feature type="binding site" evidence="1">
    <location>
        <position position="249"/>
    </location>
    <ligand>
        <name>substrate</name>
    </ligand>
</feature>
<feature type="site" description="Important for acyl-CoA specificity" evidence="1">
    <location>
        <position position="111"/>
    </location>
</feature>
<feature type="site" description="Important for substrate specificity" evidence="1">
    <location>
        <position position="192"/>
    </location>
</feature>
<evidence type="ECO:0000255" key="1">
    <source>
        <dbReference type="HAMAP-Rule" id="MF_00295"/>
    </source>
</evidence>
<sequence length="301" mass="35271">MPIIIDKDLPARKVLQEENIFVMTKERAETQDIRALKIAILNLMPTKQETEAQLLRLIGNTPLQLDVHLLHMESHLSRNVAQEHLTSFYKTFRDIENEKFDGLIITGAPVETLSFEEVDYWEELKRIMEYSKTNVTSTLHICWGAQAGLYYHYGVPKYPLKEKMFGVFEHEVREQHVKLLQGFDELFFAPHSRHTEVRENDIRGVKELTLLANSEEAGVHLVIGPEGRQVFALGHSEYSCDTLKQEYERDRQKGLNIDVPKNYFKHNNPNEKPLVRWRSHGNLLFSNWLNYYVYQETPYVL</sequence>
<name>METAA_BACAC</name>
<accession>C3LFT4</accession>